<accession>B2UCW7</accession>
<sequence>MITGLLKKIFGSRNERLIKQYRRKVAQINALEPKFEALSDAELQAKTEEFRQRFAKGETLDALLPEAFAVCREASKRVMKMRHFDVQLIGGMVLHDGKIAEMRTGEGKTLTATLAVYLNAISGQGVHVVTVNDYLAQRDAEWMGRLYNWLGLSVGVNLTTMDHDQKQAAYASDITYGTNNEFGFDYLRDNMVYDAGQRVQRPLNYAIVDEVDSILIDEARTPLIISGQAEDHTDLYRRMNGIPAQLTRQIGEEKSDGTGVEKPGDYYVDEKSHQVYLTESGHEKAEQILLQAGLIGEGESLYAPQNITLMHHLYAALRAHSLFFRDQHYVVQNGEVVIVDEFTGRLMSGRRWSDGLHQAVEAKEGVQIQQENQTLATITFQNYFRMYNKLSGMTGTADTEAYEFQEIYGLETVVIPTNRPPQRKDLQDQIYKTSKERYDAVIRDIRDCYERGQPVLVGTTSIENSELLSNLLNQAKLPHQVLNAKQHEREAEIIAQAGRPKMITIATNMAGRGTDIVLGGNVEKQSGFVMADESLSDAEKASRVKTLQDEWQSLHEQVKAAGGLHIVGTERHESRRIDNQLRGRAGRQGDPGSSRFYLSLDDQLLRIFAGDRVRAIMDRLKMPEGEPIEAGIVTRSIESAQRKVEGRNFDIRKQLLQYDDVSNDQRKELYKLRNEILEAQDVGDLVKNLRESVFTELFRTYVPAETMEEQWDVAGLEKTLREDWGVDQPLVKTLEAAQSIEDEDLLKIVLDAAEAVYEGKVAQVGRESFAGFERSVMLQSLDTHWREHLAALDMLRQGIHLRGYAQKDPKQEYKRESFELFGRLLDTIRNEVTRIVFTVRIQSQEELEQASEQIEEDLSALTNLQYKHDEFSELAEVAAGDAEIHGATPAMAASRSAASAAAAALAGEVPKVGRNDPCPCGSGKKYKQCHGKLV</sequence>
<keyword id="KW-0067">ATP-binding</keyword>
<keyword id="KW-0997">Cell inner membrane</keyword>
<keyword id="KW-1003">Cell membrane</keyword>
<keyword id="KW-0963">Cytoplasm</keyword>
<keyword id="KW-0472">Membrane</keyword>
<keyword id="KW-0479">Metal-binding</keyword>
<keyword id="KW-0547">Nucleotide-binding</keyword>
<keyword id="KW-0653">Protein transport</keyword>
<keyword id="KW-1278">Translocase</keyword>
<keyword id="KW-0811">Translocation</keyword>
<keyword id="KW-0813">Transport</keyword>
<keyword id="KW-0862">Zinc</keyword>
<reference key="1">
    <citation type="submission" date="2008-05" db="EMBL/GenBank/DDBJ databases">
        <title>Complete sequence of chromosome 1 of Ralstonia pickettii 12J.</title>
        <authorList>
            <person name="Lucas S."/>
            <person name="Copeland A."/>
            <person name="Lapidus A."/>
            <person name="Glavina del Rio T."/>
            <person name="Dalin E."/>
            <person name="Tice H."/>
            <person name="Bruce D."/>
            <person name="Goodwin L."/>
            <person name="Pitluck S."/>
            <person name="Meincke L."/>
            <person name="Brettin T."/>
            <person name="Detter J.C."/>
            <person name="Han C."/>
            <person name="Kuske C.R."/>
            <person name="Schmutz J."/>
            <person name="Larimer F."/>
            <person name="Land M."/>
            <person name="Hauser L."/>
            <person name="Kyrpides N."/>
            <person name="Mikhailova N."/>
            <person name="Marsh T."/>
            <person name="Richardson P."/>
        </authorList>
    </citation>
    <scope>NUCLEOTIDE SEQUENCE [LARGE SCALE GENOMIC DNA]</scope>
    <source>
        <strain>12J</strain>
    </source>
</reference>
<name>SECA_RALPJ</name>
<feature type="chain" id="PRO_1000145048" description="Protein translocase subunit SecA">
    <location>
        <begin position="1"/>
        <end position="934"/>
    </location>
</feature>
<feature type="binding site" evidence="1">
    <location>
        <position position="87"/>
    </location>
    <ligand>
        <name>ATP</name>
        <dbReference type="ChEBI" id="CHEBI:30616"/>
    </ligand>
</feature>
<feature type="binding site" evidence="1">
    <location>
        <begin position="105"/>
        <end position="109"/>
    </location>
    <ligand>
        <name>ATP</name>
        <dbReference type="ChEBI" id="CHEBI:30616"/>
    </ligand>
</feature>
<feature type="binding site" evidence="1">
    <location>
        <position position="515"/>
    </location>
    <ligand>
        <name>ATP</name>
        <dbReference type="ChEBI" id="CHEBI:30616"/>
    </ligand>
</feature>
<feature type="binding site" evidence="1">
    <location>
        <position position="918"/>
    </location>
    <ligand>
        <name>Zn(2+)</name>
        <dbReference type="ChEBI" id="CHEBI:29105"/>
    </ligand>
</feature>
<feature type="binding site" evidence="1">
    <location>
        <position position="920"/>
    </location>
    <ligand>
        <name>Zn(2+)</name>
        <dbReference type="ChEBI" id="CHEBI:29105"/>
    </ligand>
</feature>
<feature type="binding site" evidence="1">
    <location>
        <position position="929"/>
    </location>
    <ligand>
        <name>Zn(2+)</name>
        <dbReference type="ChEBI" id="CHEBI:29105"/>
    </ligand>
</feature>
<feature type="binding site" evidence="1">
    <location>
        <position position="930"/>
    </location>
    <ligand>
        <name>Zn(2+)</name>
        <dbReference type="ChEBI" id="CHEBI:29105"/>
    </ligand>
</feature>
<gene>
    <name evidence="1" type="primary">secA</name>
    <name type="ordered locus">Rpic_3079</name>
</gene>
<protein>
    <recommendedName>
        <fullName evidence="1">Protein translocase subunit SecA</fullName>
        <ecNumber evidence="1">7.4.2.8</ecNumber>
    </recommendedName>
</protein>
<evidence type="ECO:0000255" key="1">
    <source>
        <dbReference type="HAMAP-Rule" id="MF_01382"/>
    </source>
</evidence>
<proteinExistence type="inferred from homology"/>
<dbReference type="EC" id="7.4.2.8" evidence="1"/>
<dbReference type="EMBL" id="CP001068">
    <property type="protein sequence ID" value="ACD28202.1"/>
    <property type="molecule type" value="Genomic_DNA"/>
</dbReference>
<dbReference type="SMR" id="B2UCW7"/>
<dbReference type="STRING" id="402626.Rpic_3079"/>
<dbReference type="KEGG" id="rpi:Rpic_3079"/>
<dbReference type="PATRIC" id="fig|402626.5.peg.4217"/>
<dbReference type="eggNOG" id="COG0653">
    <property type="taxonomic scope" value="Bacteria"/>
</dbReference>
<dbReference type="HOGENOM" id="CLU_005314_3_0_4"/>
<dbReference type="GO" id="GO:0031522">
    <property type="term" value="C:cell envelope Sec protein transport complex"/>
    <property type="evidence" value="ECO:0007669"/>
    <property type="project" value="TreeGrafter"/>
</dbReference>
<dbReference type="GO" id="GO:0005829">
    <property type="term" value="C:cytosol"/>
    <property type="evidence" value="ECO:0007669"/>
    <property type="project" value="TreeGrafter"/>
</dbReference>
<dbReference type="GO" id="GO:0005886">
    <property type="term" value="C:plasma membrane"/>
    <property type="evidence" value="ECO:0007669"/>
    <property type="project" value="UniProtKB-SubCell"/>
</dbReference>
<dbReference type="GO" id="GO:0005524">
    <property type="term" value="F:ATP binding"/>
    <property type="evidence" value="ECO:0007669"/>
    <property type="project" value="UniProtKB-UniRule"/>
</dbReference>
<dbReference type="GO" id="GO:0046872">
    <property type="term" value="F:metal ion binding"/>
    <property type="evidence" value="ECO:0007669"/>
    <property type="project" value="UniProtKB-KW"/>
</dbReference>
<dbReference type="GO" id="GO:0008564">
    <property type="term" value="F:protein-exporting ATPase activity"/>
    <property type="evidence" value="ECO:0007669"/>
    <property type="project" value="UniProtKB-EC"/>
</dbReference>
<dbReference type="GO" id="GO:0065002">
    <property type="term" value="P:intracellular protein transmembrane transport"/>
    <property type="evidence" value="ECO:0007669"/>
    <property type="project" value="UniProtKB-UniRule"/>
</dbReference>
<dbReference type="GO" id="GO:0017038">
    <property type="term" value="P:protein import"/>
    <property type="evidence" value="ECO:0007669"/>
    <property type="project" value="InterPro"/>
</dbReference>
<dbReference type="GO" id="GO:0006605">
    <property type="term" value="P:protein targeting"/>
    <property type="evidence" value="ECO:0007669"/>
    <property type="project" value="UniProtKB-UniRule"/>
</dbReference>
<dbReference type="GO" id="GO:0043952">
    <property type="term" value="P:protein transport by the Sec complex"/>
    <property type="evidence" value="ECO:0007669"/>
    <property type="project" value="TreeGrafter"/>
</dbReference>
<dbReference type="CDD" id="cd17928">
    <property type="entry name" value="DEXDc_SecA"/>
    <property type="match status" value="1"/>
</dbReference>
<dbReference type="CDD" id="cd18803">
    <property type="entry name" value="SF2_C_secA"/>
    <property type="match status" value="1"/>
</dbReference>
<dbReference type="FunFam" id="3.40.50.300:FF:000081">
    <property type="entry name" value="Preprotein translocase subunit SecA"/>
    <property type="match status" value="1"/>
</dbReference>
<dbReference type="FunFam" id="3.40.50.300:FF:000113">
    <property type="entry name" value="Preprotein translocase subunit SecA"/>
    <property type="match status" value="1"/>
</dbReference>
<dbReference type="FunFam" id="3.90.1440.10:FF:000001">
    <property type="entry name" value="Preprotein translocase subunit SecA"/>
    <property type="match status" value="1"/>
</dbReference>
<dbReference type="FunFam" id="1.10.3060.10:FF:000003">
    <property type="entry name" value="Protein translocase subunit SecA"/>
    <property type="match status" value="1"/>
</dbReference>
<dbReference type="Gene3D" id="1.10.3060.10">
    <property type="entry name" value="Helical scaffold and wing domains of SecA"/>
    <property type="match status" value="1"/>
</dbReference>
<dbReference type="Gene3D" id="3.40.50.300">
    <property type="entry name" value="P-loop containing nucleotide triphosphate hydrolases"/>
    <property type="match status" value="2"/>
</dbReference>
<dbReference type="Gene3D" id="3.90.1440.10">
    <property type="entry name" value="SecA, preprotein cross-linking domain"/>
    <property type="match status" value="1"/>
</dbReference>
<dbReference type="HAMAP" id="MF_01382">
    <property type="entry name" value="SecA"/>
    <property type="match status" value="1"/>
</dbReference>
<dbReference type="InterPro" id="IPR014001">
    <property type="entry name" value="Helicase_ATP-bd"/>
</dbReference>
<dbReference type="InterPro" id="IPR001650">
    <property type="entry name" value="Helicase_C-like"/>
</dbReference>
<dbReference type="InterPro" id="IPR027417">
    <property type="entry name" value="P-loop_NTPase"/>
</dbReference>
<dbReference type="InterPro" id="IPR004027">
    <property type="entry name" value="SEC_C_motif"/>
</dbReference>
<dbReference type="InterPro" id="IPR000185">
    <property type="entry name" value="SecA"/>
</dbReference>
<dbReference type="InterPro" id="IPR020937">
    <property type="entry name" value="SecA_CS"/>
</dbReference>
<dbReference type="InterPro" id="IPR011115">
    <property type="entry name" value="SecA_DEAD"/>
</dbReference>
<dbReference type="InterPro" id="IPR014018">
    <property type="entry name" value="SecA_motor_DEAD"/>
</dbReference>
<dbReference type="InterPro" id="IPR011130">
    <property type="entry name" value="SecA_preprotein_X-link_dom"/>
</dbReference>
<dbReference type="InterPro" id="IPR044722">
    <property type="entry name" value="SecA_SF2_C"/>
</dbReference>
<dbReference type="InterPro" id="IPR011116">
    <property type="entry name" value="SecA_Wing/Scaffold"/>
</dbReference>
<dbReference type="InterPro" id="IPR036266">
    <property type="entry name" value="SecA_Wing/Scaffold_sf"/>
</dbReference>
<dbReference type="InterPro" id="IPR036670">
    <property type="entry name" value="SecA_X-link_sf"/>
</dbReference>
<dbReference type="NCBIfam" id="NF009538">
    <property type="entry name" value="PRK12904.1"/>
    <property type="match status" value="1"/>
</dbReference>
<dbReference type="NCBIfam" id="TIGR00963">
    <property type="entry name" value="secA"/>
    <property type="match status" value="1"/>
</dbReference>
<dbReference type="PANTHER" id="PTHR30612:SF0">
    <property type="entry name" value="CHLOROPLAST PROTEIN-TRANSPORTING ATPASE"/>
    <property type="match status" value="1"/>
</dbReference>
<dbReference type="PANTHER" id="PTHR30612">
    <property type="entry name" value="SECA INNER MEMBRANE COMPONENT OF SEC PROTEIN SECRETION SYSTEM"/>
    <property type="match status" value="1"/>
</dbReference>
<dbReference type="Pfam" id="PF21090">
    <property type="entry name" value="P-loop_SecA"/>
    <property type="match status" value="1"/>
</dbReference>
<dbReference type="Pfam" id="PF02810">
    <property type="entry name" value="SEC-C"/>
    <property type="match status" value="1"/>
</dbReference>
<dbReference type="Pfam" id="PF07517">
    <property type="entry name" value="SecA_DEAD"/>
    <property type="match status" value="1"/>
</dbReference>
<dbReference type="Pfam" id="PF01043">
    <property type="entry name" value="SecA_PP_bind"/>
    <property type="match status" value="1"/>
</dbReference>
<dbReference type="Pfam" id="PF07516">
    <property type="entry name" value="SecA_SW"/>
    <property type="match status" value="1"/>
</dbReference>
<dbReference type="PRINTS" id="PR00906">
    <property type="entry name" value="SECA"/>
</dbReference>
<dbReference type="SMART" id="SM00957">
    <property type="entry name" value="SecA_DEAD"/>
    <property type="match status" value="1"/>
</dbReference>
<dbReference type="SMART" id="SM00958">
    <property type="entry name" value="SecA_PP_bind"/>
    <property type="match status" value="1"/>
</dbReference>
<dbReference type="SUPFAM" id="SSF81886">
    <property type="entry name" value="Helical scaffold and wing domains of SecA"/>
    <property type="match status" value="1"/>
</dbReference>
<dbReference type="SUPFAM" id="SSF52540">
    <property type="entry name" value="P-loop containing nucleoside triphosphate hydrolases"/>
    <property type="match status" value="2"/>
</dbReference>
<dbReference type="SUPFAM" id="SSF81767">
    <property type="entry name" value="Pre-protein crosslinking domain of SecA"/>
    <property type="match status" value="1"/>
</dbReference>
<dbReference type="PROSITE" id="PS01312">
    <property type="entry name" value="SECA"/>
    <property type="match status" value="1"/>
</dbReference>
<dbReference type="PROSITE" id="PS51196">
    <property type="entry name" value="SECA_MOTOR_DEAD"/>
    <property type="match status" value="1"/>
</dbReference>
<comment type="function">
    <text evidence="1">Part of the Sec protein translocase complex. Interacts with the SecYEG preprotein conducting channel. Has a central role in coupling the hydrolysis of ATP to the transfer of proteins into and across the cell membrane, serving both as a receptor for the preprotein-SecB complex and as an ATP-driven molecular motor driving the stepwise translocation of polypeptide chains across the membrane.</text>
</comment>
<comment type="catalytic activity">
    <reaction evidence="1">
        <text>ATP + H2O + cellular proteinSide 1 = ADP + phosphate + cellular proteinSide 2.</text>
        <dbReference type="EC" id="7.4.2.8"/>
    </reaction>
</comment>
<comment type="cofactor">
    <cofactor evidence="1">
        <name>Zn(2+)</name>
        <dbReference type="ChEBI" id="CHEBI:29105"/>
    </cofactor>
    <text evidence="1">May bind 1 zinc ion per subunit.</text>
</comment>
<comment type="subunit">
    <text evidence="1">Monomer and homodimer. Part of the essential Sec protein translocation apparatus which comprises SecA, SecYEG and auxiliary proteins SecDF-YajC and YidC.</text>
</comment>
<comment type="subcellular location">
    <subcellularLocation>
        <location evidence="1">Cell inner membrane</location>
        <topology evidence="1">Peripheral membrane protein</topology>
        <orientation evidence="1">Cytoplasmic side</orientation>
    </subcellularLocation>
    <subcellularLocation>
        <location evidence="1">Cytoplasm</location>
    </subcellularLocation>
    <text evidence="1">Distribution is 50-50.</text>
</comment>
<comment type="similarity">
    <text evidence="1">Belongs to the SecA family.</text>
</comment>
<organism>
    <name type="scientific">Ralstonia pickettii (strain 12J)</name>
    <dbReference type="NCBI Taxonomy" id="402626"/>
    <lineage>
        <taxon>Bacteria</taxon>
        <taxon>Pseudomonadati</taxon>
        <taxon>Pseudomonadota</taxon>
        <taxon>Betaproteobacteria</taxon>
        <taxon>Burkholderiales</taxon>
        <taxon>Burkholderiaceae</taxon>
        <taxon>Ralstonia</taxon>
    </lineage>
</organism>